<organism>
    <name type="scientific">Mycobacterium tuberculosis (strain ATCC 25618 / H37Rv)</name>
    <dbReference type="NCBI Taxonomy" id="83332"/>
    <lineage>
        <taxon>Bacteria</taxon>
        <taxon>Bacillati</taxon>
        <taxon>Actinomycetota</taxon>
        <taxon>Actinomycetes</taxon>
        <taxon>Mycobacteriales</taxon>
        <taxon>Mycobacteriaceae</taxon>
        <taxon>Mycobacterium</taxon>
        <taxon>Mycobacterium tuberculosis complex</taxon>
    </lineage>
</organism>
<sequence>MTAPGLTAAVEGIAHNKGELFASFDVDAFEVPHGRDEIWRFTPLRRLRGLHDGSARATGSATITVSERPGVYTQTVRRGDPRLGEGGVPTDRVAAQAFSSFNSATLVTVERDTQVVEPVGITVTGPGEGAVAYGHLQVRIEELGEAVVVIDHRGGGTYADNVEFVVDDAARLTAVWIADWADNTVHLSAHHARIGKDAVLRHVTVMLGGDVVRMSAGVRFCGAGGDAELLGLYFADDGQHLESRLLVDHAHPDCKSNVLYKGALQGDPASSLPDAHTVWVGDVLIRAQATGTDTFEVNRNLVLTDGARADSVPNLEIETGEIVGAGHASATGRFDDEQLFYLRSRGIPEAQARRLVVRGFFGEIIAKIAVPEVRERLTAAIEHELEITESTEKTTVS</sequence>
<comment type="miscellaneous">
    <text>Was identified as a high-confidence drug target.</text>
</comment>
<comment type="similarity">
    <text evidence="1">Belongs to the iron-sulfur cluster assembly SufBD family.</text>
</comment>
<proteinExistence type="evidence at protein level"/>
<keyword id="KW-0007">Acetylation</keyword>
<keyword id="KW-1185">Reference proteome</keyword>
<dbReference type="EMBL" id="AL123456">
    <property type="protein sequence ID" value="CCP44221.1"/>
    <property type="molecule type" value="Genomic_DNA"/>
</dbReference>
<dbReference type="PIR" id="A70872">
    <property type="entry name" value="A70872"/>
</dbReference>
<dbReference type="RefSeq" id="NP_215978.1">
    <property type="nucleotide sequence ID" value="NC_000962.3"/>
</dbReference>
<dbReference type="SMR" id="P9WFP5"/>
<dbReference type="FunCoup" id="P9WFP5">
    <property type="interactions" value="4"/>
</dbReference>
<dbReference type="STRING" id="83332.Rv1462"/>
<dbReference type="iPTMnet" id="P9WFP5"/>
<dbReference type="PaxDb" id="83332-Rv1462"/>
<dbReference type="DNASU" id="886567"/>
<dbReference type="GeneID" id="886567"/>
<dbReference type="KEGG" id="mtu:Rv1462"/>
<dbReference type="KEGG" id="mtv:RVBD_1462"/>
<dbReference type="TubercuList" id="Rv1462"/>
<dbReference type="eggNOG" id="COG0719">
    <property type="taxonomic scope" value="Bacteria"/>
</dbReference>
<dbReference type="InParanoid" id="P9WFP5"/>
<dbReference type="OrthoDB" id="9803529at2"/>
<dbReference type="PhylomeDB" id="P9WFP5"/>
<dbReference type="Proteomes" id="UP000001584">
    <property type="component" value="Chromosome"/>
</dbReference>
<dbReference type="GO" id="GO:0016226">
    <property type="term" value="P:iron-sulfur cluster assembly"/>
    <property type="evidence" value="ECO:0007669"/>
    <property type="project" value="InterPro"/>
</dbReference>
<dbReference type="InterPro" id="IPR055346">
    <property type="entry name" value="Fe-S_cluster_assembly_SufBD"/>
</dbReference>
<dbReference type="InterPro" id="IPR000825">
    <property type="entry name" value="SUF_FeS_clus_asmbl_SufBD_core"/>
</dbReference>
<dbReference type="InterPro" id="IPR037284">
    <property type="entry name" value="SUF_FeS_clus_asmbl_SufBD_sf"/>
</dbReference>
<dbReference type="InterPro" id="IPR011542">
    <property type="entry name" value="SUF_FeS_clus_asmbl_SufD"/>
</dbReference>
<dbReference type="NCBIfam" id="TIGR01981">
    <property type="entry name" value="sufD"/>
    <property type="match status" value="1"/>
</dbReference>
<dbReference type="PANTHER" id="PTHR43575">
    <property type="entry name" value="PROTEIN ABCI7, CHLOROPLASTIC"/>
    <property type="match status" value="1"/>
</dbReference>
<dbReference type="PANTHER" id="PTHR43575:SF1">
    <property type="entry name" value="PROTEIN ABCI7, CHLOROPLASTIC"/>
    <property type="match status" value="1"/>
</dbReference>
<dbReference type="Pfam" id="PF01458">
    <property type="entry name" value="SUFBD_core"/>
    <property type="match status" value="1"/>
</dbReference>
<dbReference type="SUPFAM" id="SSF101960">
    <property type="entry name" value="Stabilizer of iron transporter SufD"/>
    <property type="match status" value="1"/>
</dbReference>
<name>Y1462_MYCTU</name>
<evidence type="ECO:0000305" key="1"/>
<evidence type="ECO:0007744" key="2">
    <source>
    </source>
</evidence>
<protein>
    <recommendedName>
        <fullName>Iron-sulfur cluster assembly SufBD family protein Rv1462</fullName>
    </recommendedName>
</protein>
<feature type="initiator methionine" description="Removed" evidence="2">
    <location>
        <position position="1"/>
    </location>
</feature>
<feature type="chain" id="PRO_0000147386" description="Iron-sulfur cluster assembly SufBD family protein Rv1462">
    <location>
        <begin position="2"/>
        <end position="397"/>
    </location>
</feature>
<feature type="modified residue" description="N-acetylthreonine" evidence="2">
    <location>
        <position position="2"/>
    </location>
</feature>
<accession>P9WFP5</accession>
<accession>L0T6Q6</accession>
<accession>O53153</accession>
<gene>
    <name type="ordered locus">Rv1462</name>
    <name type="ORF">MTV007.09</name>
</gene>
<reference key="1">
    <citation type="journal article" date="1998" name="Nature">
        <title>Deciphering the biology of Mycobacterium tuberculosis from the complete genome sequence.</title>
        <authorList>
            <person name="Cole S.T."/>
            <person name="Brosch R."/>
            <person name="Parkhill J."/>
            <person name="Garnier T."/>
            <person name="Churcher C.M."/>
            <person name="Harris D.E."/>
            <person name="Gordon S.V."/>
            <person name="Eiglmeier K."/>
            <person name="Gas S."/>
            <person name="Barry C.E. III"/>
            <person name="Tekaia F."/>
            <person name="Badcock K."/>
            <person name="Basham D."/>
            <person name="Brown D."/>
            <person name="Chillingworth T."/>
            <person name="Connor R."/>
            <person name="Davies R.M."/>
            <person name="Devlin K."/>
            <person name="Feltwell T."/>
            <person name="Gentles S."/>
            <person name="Hamlin N."/>
            <person name="Holroyd S."/>
            <person name="Hornsby T."/>
            <person name="Jagels K."/>
            <person name="Krogh A."/>
            <person name="McLean J."/>
            <person name="Moule S."/>
            <person name="Murphy L.D."/>
            <person name="Oliver S."/>
            <person name="Osborne J."/>
            <person name="Quail M.A."/>
            <person name="Rajandream M.A."/>
            <person name="Rogers J."/>
            <person name="Rutter S."/>
            <person name="Seeger K."/>
            <person name="Skelton S."/>
            <person name="Squares S."/>
            <person name="Squares R."/>
            <person name="Sulston J.E."/>
            <person name="Taylor K."/>
            <person name="Whitehead S."/>
            <person name="Barrell B.G."/>
        </authorList>
    </citation>
    <scope>NUCLEOTIDE SEQUENCE [LARGE SCALE GENOMIC DNA]</scope>
    <source>
        <strain>ATCC 25618 / H37Rv</strain>
    </source>
</reference>
<reference key="2">
    <citation type="journal article" date="2008" name="BMC Syst. Biol.">
        <title>targetTB: a target identification pipeline for Mycobacterium tuberculosis through an interactome, reactome and genome-scale structural analysis.</title>
        <authorList>
            <person name="Raman K."/>
            <person name="Yeturu K."/>
            <person name="Chandra N."/>
        </authorList>
    </citation>
    <scope>IDENTIFICATION AS A DRUG TARGET [LARGE SCALE ANALYSIS]</scope>
</reference>
<reference key="3">
    <citation type="journal article" date="2011" name="Mol. Cell. Proteomics">
        <title>Proteogenomic analysis of Mycobacterium tuberculosis by high resolution mass spectrometry.</title>
        <authorList>
            <person name="Kelkar D.S."/>
            <person name="Kumar D."/>
            <person name="Kumar P."/>
            <person name="Balakrishnan L."/>
            <person name="Muthusamy B."/>
            <person name="Yadav A.K."/>
            <person name="Shrivastava P."/>
            <person name="Marimuthu A."/>
            <person name="Anand S."/>
            <person name="Sundaram H."/>
            <person name="Kingsbury R."/>
            <person name="Harsha H.C."/>
            <person name="Nair B."/>
            <person name="Prasad T.S."/>
            <person name="Chauhan D.S."/>
            <person name="Katoch K."/>
            <person name="Katoch V.M."/>
            <person name="Kumar P."/>
            <person name="Chaerkady R."/>
            <person name="Ramachandran S."/>
            <person name="Dash D."/>
            <person name="Pandey A."/>
        </authorList>
    </citation>
    <scope>ACETYLATION [LARGE SCALE ANALYSIS] AT THR-2</scope>
    <scope>CLEAVAGE OF INITIATOR METHIONINE [LARGE SCALE ANALYSIS]</scope>
    <scope>IDENTIFICATION BY MASS SPECTROMETRY [LARGE SCALE ANALYSIS]</scope>
    <source>
        <strain>ATCC 25618 / H37Rv</strain>
    </source>
</reference>